<dbReference type="EC" id="2.4.1.13"/>
<dbReference type="EMBL" id="X70990">
    <property type="protein sequence ID" value="CAA50317.1"/>
    <property type="molecule type" value="Genomic_DNA"/>
</dbReference>
<dbReference type="EMBL" id="AF296832">
    <property type="status" value="NOT_ANNOTATED_CDS"/>
    <property type="molecule type" value="Genomic_DNA"/>
</dbReference>
<dbReference type="EMBL" id="CP002688">
    <property type="protein sequence ID" value="AED92894.1"/>
    <property type="molecule type" value="Genomic_DNA"/>
</dbReference>
<dbReference type="EMBL" id="CP002688">
    <property type="protein sequence ID" value="AED92895.1"/>
    <property type="molecule type" value="Genomic_DNA"/>
</dbReference>
<dbReference type="EMBL" id="CP002688">
    <property type="protein sequence ID" value="ANM71045.1"/>
    <property type="molecule type" value="Genomic_DNA"/>
</dbReference>
<dbReference type="EMBL" id="AK316826">
    <property type="protein sequence ID" value="BAH19538.1"/>
    <property type="molecule type" value="mRNA"/>
</dbReference>
<dbReference type="EMBL" id="AK222090">
    <property type="protein sequence ID" value="BAD94975.1"/>
    <property type="status" value="ALT_INIT"/>
    <property type="molecule type" value="mRNA"/>
</dbReference>
<dbReference type="RefSeq" id="NP_001031915.1">
    <property type="nucleotide sequence ID" value="NM_001036838.2"/>
</dbReference>
<dbReference type="RefSeq" id="NP_001332603.1">
    <property type="nucleotide sequence ID" value="NM_001343687.1"/>
</dbReference>
<dbReference type="RefSeq" id="NP_197583.1">
    <property type="nucleotide sequence ID" value="NM_122090.4"/>
</dbReference>
<dbReference type="PDB" id="3S27">
    <property type="method" value="X-ray"/>
    <property type="resolution" value="2.91 A"/>
    <property type="chains" value="A/B/C/D/E/F/G/H=1-808"/>
</dbReference>
<dbReference type="PDB" id="3S28">
    <property type="method" value="X-ray"/>
    <property type="resolution" value="2.80 A"/>
    <property type="chains" value="A/B/C/D/E/F/G/H=1-808"/>
</dbReference>
<dbReference type="PDB" id="3S29">
    <property type="method" value="X-ray"/>
    <property type="resolution" value="2.85 A"/>
    <property type="chains" value="A/B/C/D/E/F/G/H=1-808"/>
</dbReference>
<dbReference type="PDBsum" id="3S27"/>
<dbReference type="PDBsum" id="3S28"/>
<dbReference type="PDBsum" id="3S29"/>
<dbReference type="SMR" id="P49040"/>
<dbReference type="BioGRID" id="17481">
    <property type="interactions" value="4"/>
</dbReference>
<dbReference type="FunCoup" id="P49040">
    <property type="interactions" value="185"/>
</dbReference>
<dbReference type="STRING" id="3702.P49040"/>
<dbReference type="CAZy" id="GT4">
    <property type="family name" value="Glycosyltransferase Family 4"/>
</dbReference>
<dbReference type="iPTMnet" id="P49040"/>
<dbReference type="SwissPalm" id="P49040"/>
<dbReference type="PaxDb" id="3702-AT5G20830.1"/>
<dbReference type="ProteomicsDB" id="228313"/>
<dbReference type="EnsemblPlants" id="AT5G20830.1">
    <property type="protein sequence ID" value="AT5G20830.1"/>
    <property type="gene ID" value="AT5G20830"/>
</dbReference>
<dbReference type="EnsemblPlants" id="AT5G20830.2">
    <property type="protein sequence ID" value="AT5G20830.2"/>
    <property type="gene ID" value="AT5G20830"/>
</dbReference>
<dbReference type="EnsemblPlants" id="AT5G20830.3">
    <property type="protein sequence ID" value="AT5G20830.3"/>
    <property type="gene ID" value="AT5G20830"/>
</dbReference>
<dbReference type="GeneID" id="832206"/>
<dbReference type="Gramene" id="AT5G20830.1">
    <property type="protein sequence ID" value="AT5G20830.1"/>
    <property type="gene ID" value="AT5G20830"/>
</dbReference>
<dbReference type="Gramene" id="AT5G20830.2">
    <property type="protein sequence ID" value="AT5G20830.2"/>
    <property type="gene ID" value="AT5G20830"/>
</dbReference>
<dbReference type="Gramene" id="AT5G20830.3">
    <property type="protein sequence ID" value="AT5G20830.3"/>
    <property type="gene ID" value="AT5G20830"/>
</dbReference>
<dbReference type="KEGG" id="ath:AT5G20830"/>
<dbReference type="Araport" id="AT5G20830"/>
<dbReference type="TAIR" id="AT5G20830">
    <property type="gene designation" value="SUS1"/>
</dbReference>
<dbReference type="eggNOG" id="KOG0853">
    <property type="taxonomic scope" value="Eukaryota"/>
</dbReference>
<dbReference type="HOGENOM" id="CLU_019158_1_0_1"/>
<dbReference type="InParanoid" id="P49040"/>
<dbReference type="OMA" id="SRCVSQG"/>
<dbReference type="PhylomeDB" id="P49040"/>
<dbReference type="BioCyc" id="ARA:AT5G20830-MONOMER"/>
<dbReference type="BioCyc" id="MetaCyc:AT5G20830-MONOMER"/>
<dbReference type="BRENDA" id="2.4.1.13">
    <property type="organism ID" value="399"/>
</dbReference>
<dbReference type="CD-CODE" id="4299E36E">
    <property type="entry name" value="Nucleolus"/>
</dbReference>
<dbReference type="EvolutionaryTrace" id="P49040"/>
<dbReference type="PRO" id="PR:P49040"/>
<dbReference type="Proteomes" id="UP000006548">
    <property type="component" value="Chromosome 5"/>
</dbReference>
<dbReference type="ExpressionAtlas" id="P49040">
    <property type="expression patterns" value="baseline and differential"/>
</dbReference>
<dbReference type="GO" id="GO:0005829">
    <property type="term" value="C:cytosol"/>
    <property type="evidence" value="ECO:0007005"/>
    <property type="project" value="TAIR"/>
</dbReference>
<dbReference type="GO" id="GO:0009506">
    <property type="term" value="C:plasmodesma"/>
    <property type="evidence" value="ECO:0007005"/>
    <property type="project" value="TAIR"/>
</dbReference>
<dbReference type="GO" id="GO:0016157">
    <property type="term" value="F:sucrose synthase activity"/>
    <property type="evidence" value="ECO:0000314"/>
    <property type="project" value="UniProtKB"/>
</dbReference>
<dbReference type="GO" id="GO:0071456">
    <property type="term" value="P:cellular response to hypoxia"/>
    <property type="evidence" value="ECO:0007007"/>
    <property type="project" value="TAIR"/>
</dbReference>
<dbReference type="GO" id="GO:0009409">
    <property type="term" value="P:response to cold"/>
    <property type="evidence" value="ECO:0000270"/>
    <property type="project" value="UniProtKB"/>
</dbReference>
<dbReference type="GO" id="GO:0009413">
    <property type="term" value="P:response to flooding"/>
    <property type="evidence" value="ECO:0000270"/>
    <property type="project" value="TAIR"/>
</dbReference>
<dbReference type="GO" id="GO:0009749">
    <property type="term" value="P:response to glucose"/>
    <property type="evidence" value="ECO:0000270"/>
    <property type="project" value="UniProtKB"/>
</dbReference>
<dbReference type="GO" id="GO:0001666">
    <property type="term" value="P:response to hypoxia"/>
    <property type="evidence" value="ECO:0000270"/>
    <property type="project" value="UniProtKB"/>
</dbReference>
<dbReference type="GO" id="GO:0010555">
    <property type="term" value="P:response to mannitol"/>
    <property type="evidence" value="ECO:0000270"/>
    <property type="project" value="UniProtKB"/>
</dbReference>
<dbReference type="GO" id="GO:0006970">
    <property type="term" value="P:response to osmotic stress"/>
    <property type="evidence" value="ECO:0000270"/>
    <property type="project" value="TAIR"/>
</dbReference>
<dbReference type="GO" id="GO:0072708">
    <property type="term" value="P:response to sorbitol"/>
    <property type="evidence" value="ECO:0000270"/>
    <property type="project" value="UniProtKB"/>
</dbReference>
<dbReference type="GO" id="GO:0009744">
    <property type="term" value="P:response to sucrose"/>
    <property type="evidence" value="ECO:0000270"/>
    <property type="project" value="UniProtKB"/>
</dbReference>
<dbReference type="GO" id="GO:0009414">
    <property type="term" value="P:response to water deprivation"/>
    <property type="evidence" value="ECO:0000270"/>
    <property type="project" value="UniProtKB"/>
</dbReference>
<dbReference type="GO" id="GO:0005985">
    <property type="term" value="P:sucrose metabolic process"/>
    <property type="evidence" value="ECO:0007669"/>
    <property type="project" value="InterPro"/>
</dbReference>
<dbReference type="FunFam" id="1.20.120.1230:FF:000001">
    <property type="entry name" value="Sucrose synthase"/>
    <property type="match status" value="1"/>
</dbReference>
<dbReference type="FunFam" id="3.10.450.330:FF:000001">
    <property type="entry name" value="Sucrose synthase"/>
    <property type="match status" value="1"/>
</dbReference>
<dbReference type="FunFam" id="3.40.50.2000:FF:000004">
    <property type="entry name" value="Sucrose synthase"/>
    <property type="match status" value="1"/>
</dbReference>
<dbReference type="Gene3D" id="1.20.120.1230">
    <property type="match status" value="1"/>
</dbReference>
<dbReference type="Gene3D" id="3.10.450.330">
    <property type="match status" value="1"/>
</dbReference>
<dbReference type="Gene3D" id="3.40.50.2000">
    <property type="entry name" value="Glycogen Phosphorylase B"/>
    <property type="match status" value="2"/>
</dbReference>
<dbReference type="InterPro" id="IPR001296">
    <property type="entry name" value="Glyco_trans_1"/>
</dbReference>
<dbReference type="InterPro" id="IPR000368">
    <property type="entry name" value="Sucrose_synth_GT-B1"/>
</dbReference>
<dbReference type="InterPro" id="IPR012820">
    <property type="entry name" value="Sucrose_synthase_pln/cyn"/>
</dbReference>
<dbReference type="InterPro" id="IPR056736">
    <property type="entry name" value="SUS_EPBD"/>
</dbReference>
<dbReference type="InterPro" id="IPR056735">
    <property type="entry name" value="SUS_N"/>
</dbReference>
<dbReference type="NCBIfam" id="TIGR02470">
    <property type="entry name" value="sucr_synth"/>
    <property type="match status" value="1"/>
</dbReference>
<dbReference type="PANTHER" id="PTHR45839">
    <property type="match status" value="1"/>
</dbReference>
<dbReference type="PANTHER" id="PTHR45839:SF7">
    <property type="entry name" value="SUCROSE SYNTHASE 1"/>
    <property type="match status" value="1"/>
</dbReference>
<dbReference type="Pfam" id="PF00534">
    <property type="entry name" value="Glycos_transf_1"/>
    <property type="match status" value="1"/>
</dbReference>
<dbReference type="Pfam" id="PF00862">
    <property type="entry name" value="GT-B_Sucrose_synth"/>
    <property type="match status" value="1"/>
</dbReference>
<dbReference type="Pfam" id="PF24862">
    <property type="entry name" value="SUS_EPBD"/>
    <property type="match status" value="1"/>
</dbReference>
<dbReference type="Pfam" id="PF24861">
    <property type="entry name" value="SUS_N"/>
    <property type="match status" value="1"/>
</dbReference>
<dbReference type="SUPFAM" id="SSF53756">
    <property type="entry name" value="UDP-Glycosyltransferase/glycogen phosphorylase"/>
    <property type="match status" value="1"/>
</dbReference>
<comment type="function">
    <text evidence="7">Sucrose-cleaving enzyme that provides UDP-glucose and fructose for various metabolic pathways.</text>
</comment>
<comment type="catalytic activity">
    <reaction>
        <text>an NDP-alpha-D-glucose + D-fructose = a ribonucleoside 5'-diphosphate + sucrose + H(+)</text>
        <dbReference type="Rhea" id="RHEA:16241"/>
        <dbReference type="ChEBI" id="CHEBI:15378"/>
        <dbReference type="ChEBI" id="CHEBI:17992"/>
        <dbReference type="ChEBI" id="CHEBI:37721"/>
        <dbReference type="ChEBI" id="CHEBI:57930"/>
        <dbReference type="ChEBI" id="CHEBI:76533"/>
        <dbReference type="EC" id="2.4.1.13"/>
    </reaction>
</comment>
<comment type="biophysicochemical properties">
    <kinetics>
        <KM evidence="3">4.37 mM for D-fructose (synthetic reaction) at pH 9.4</KM>
        <KM evidence="3">0.04 mM for UDP-glucose (synthetic reaction) at pH 9.4</KM>
        <KM evidence="3">31.58 mM for sucrose (degradative reaction) at pH 6</KM>
        <KM evidence="8">53 mM for sucrose (degradative reaction) at pH 7</KM>
        <KM evidence="3">0.08 mM for UDP (degradative reaction) at pH 6</KM>
        <KM evidence="8">0.39 mM for UDP (degradative reaction) at pH 7</KM>
        <KM evidence="8">0.17 mM for ADP (degradative reaction) at pH 7</KM>
        <Vmax evidence="3">11.14 umol/min/mg enzyme for synthetic reaction at pH 9.4</Vmax>
        <Vmax evidence="3">4.68 umol/min/mg enzyme for degradative reaction at pH 6</Vmax>
        <Vmax evidence="8">585.0 umol/min/mg enzyme for degradative reaction at pH 7</Vmax>
    </kinetics>
    <phDependence>
        <text evidence="3 8">Optimum pH is 6.0-7.0 for degradative reaction (PubMed:17257168, PubMed:22184213). Optimum pH is 7.0 for synthetic reaction (PubMed:22184213). Optimum pH is 9.0-9.5 for synthetic reaction (PubMed:17257168).</text>
    </phDependence>
</comment>
<comment type="subunit">
    <text evidence="7">Homotetramer.</text>
</comment>
<comment type="tissue specificity">
    <text evidence="2 3 5 9">Expressed in the phloem of leaves and in roots. Detected in the whole plant but more precisely confined to the vasculature in cotyledons, mature leaves and siliques.</text>
</comment>
<comment type="induction">
    <text evidence="1 2 3 6 9">By cold, drought and anaerobic stress. By sugar or osmoticum. By anoxia in the roots (at protein level). Up-regulated by NUC/IDD8.</text>
</comment>
<comment type="disruption phenotype">
    <text evidence="3">No visible phenotype.</text>
</comment>
<comment type="biotechnology">
    <text evidence="4">A one-pot system for efficient enzymatic production of a wide range of glucosides couples the activities of two recombinant enzymes, UDP-glucose: curcumin glucosyltransferase from Catharanthus roseus (CaUGT2) and sucrose synthase from Arabidopsis thaliana (AtSUS1). UDP, a product inhibitor of UDP-glucosyltransferase, was removed from the system and used for regeneration of UDP-glucose by the second enzyme, AtSUS1. The productivity was increased several-fold and UDP-glucose initially added to the reaction mixture could be reduced to one-tenth of the normal level.</text>
</comment>
<comment type="similarity">
    <text evidence="10">Belongs to the glycosyltransferase 1 family. Plant sucrose synthase subfamily.</text>
</comment>
<comment type="sequence caution" evidence="10">
    <conflict type="erroneous initiation">
        <sequence resource="EMBL-CDS" id="BAD94975"/>
    </conflict>
    <text>Truncated N-terminus.</text>
</comment>
<name>SUS1_ARATH</name>
<keyword id="KW-0002">3D-structure</keyword>
<keyword id="KW-0328">Glycosyltransferase</keyword>
<keyword id="KW-1185">Reference proteome</keyword>
<keyword id="KW-0346">Stress response</keyword>
<keyword id="KW-0808">Transferase</keyword>
<feature type="chain" id="PRO_0000204644" description="Sucrose synthase 1">
    <location>
        <begin position="1"/>
        <end position="808"/>
    </location>
</feature>
<feature type="region of interest" description="GT-B glycosyltransferase">
    <location>
        <begin position="277"/>
        <end position="754"/>
    </location>
</feature>
<feature type="sequence conflict" description="In Ref. 1; CAA50317." evidence="10" ref="1">
    <original>R</original>
    <variation>Q</variation>
    <location>
        <position position="61"/>
    </location>
</feature>
<feature type="sequence conflict" description="In Ref. 1; CAA50317." evidence="10" ref="1">
    <original>V</original>
    <variation>L</variation>
    <location>
        <position position="108"/>
    </location>
</feature>
<feature type="sequence conflict" description="In Ref. 1; CAA50317." evidence="10" ref="1">
    <original>S</original>
    <variation>P</variation>
    <location>
        <position position="222"/>
    </location>
</feature>
<feature type="sequence conflict" description="In Ref. 1; CAA50317." evidence="10" ref="1">
    <original>N</original>
    <variation>D</variation>
    <location>
        <position position="405"/>
    </location>
</feature>
<feature type="sequence conflict" description="In Ref. 1; CAA50317." evidence="10" ref="1">
    <original>C</original>
    <variation>QC</variation>
    <location>
        <position position="434"/>
    </location>
</feature>
<feature type="sequence conflict" description="In Ref. 1; CAA50317." evidence="10" ref="1">
    <original>V</original>
    <variation>I</variation>
    <location>
        <position position="609"/>
    </location>
</feature>
<feature type="sequence conflict" description="In Ref. 1; CAA50317." evidence="10" ref="1">
    <original>EK</original>
    <variation>DE</variation>
    <location>
        <begin position="751"/>
        <end position="752"/>
    </location>
</feature>
<feature type="sequence conflict" description="In Ref. 1; CAA50317." evidence="10" ref="1">
    <location>
        <begin position="799"/>
        <end position="800"/>
    </location>
</feature>
<feature type="helix" evidence="13">
    <location>
        <begin position="16"/>
        <end position="18"/>
    </location>
</feature>
<feature type="turn" evidence="13">
    <location>
        <begin position="19"/>
        <end position="23"/>
    </location>
</feature>
<feature type="helix" evidence="12">
    <location>
        <begin position="30"/>
        <end position="40"/>
    </location>
</feature>
<feature type="strand" evidence="12">
    <location>
        <begin position="43"/>
        <end position="47"/>
    </location>
</feature>
<feature type="helix" evidence="12">
    <location>
        <begin position="48"/>
        <end position="53"/>
    </location>
</feature>
<feature type="turn" evidence="12">
    <location>
        <begin position="54"/>
        <end position="58"/>
    </location>
</feature>
<feature type="helix" evidence="12">
    <location>
        <begin position="61"/>
        <end position="63"/>
    </location>
</feature>
<feature type="turn" evidence="13">
    <location>
        <begin position="64"/>
        <end position="68"/>
    </location>
</feature>
<feature type="helix" evidence="12">
    <location>
        <begin position="69"/>
        <end position="74"/>
    </location>
</feature>
<feature type="strand" evidence="12">
    <location>
        <begin position="76"/>
        <end position="81"/>
    </location>
</feature>
<feature type="strand" evidence="12">
    <location>
        <begin position="83"/>
        <end position="93"/>
    </location>
</feature>
<feature type="strand" evidence="12">
    <location>
        <begin position="96"/>
        <end position="103"/>
    </location>
</feature>
<feature type="strand" evidence="12">
    <location>
        <begin position="109"/>
        <end position="112"/>
    </location>
</feature>
<feature type="helix" evidence="12">
    <location>
        <begin position="114"/>
        <end position="126"/>
    </location>
</feature>
<feature type="strand" evidence="12">
    <location>
        <begin position="136"/>
        <end position="138"/>
    </location>
</feature>
<feature type="helix" evidence="12">
    <location>
        <begin position="140"/>
        <end position="143"/>
    </location>
</feature>
<feature type="helix" evidence="12">
    <location>
        <begin position="152"/>
        <end position="154"/>
    </location>
</feature>
<feature type="helix" evidence="12">
    <location>
        <begin position="158"/>
        <end position="169"/>
    </location>
</feature>
<feature type="turn" evidence="12">
    <location>
        <begin position="170"/>
        <end position="172"/>
    </location>
</feature>
<feature type="helix" evidence="12">
    <location>
        <begin position="174"/>
        <end position="186"/>
    </location>
</feature>
<feature type="strand" evidence="12">
    <location>
        <begin position="192"/>
        <end position="196"/>
    </location>
</feature>
<feature type="helix" evidence="12">
    <location>
        <begin position="203"/>
        <end position="219"/>
    </location>
</feature>
<feature type="helix" evidence="12">
    <location>
        <begin position="226"/>
        <end position="235"/>
    </location>
</feature>
<feature type="helix" evidence="12">
    <location>
        <begin position="246"/>
        <end position="261"/>
    </location>
</feature>
<feature type="helix" evidence="12">
    <location>
        <begin position="265"/>
        <end position="274"/>
    </location>
</feature>
<feature type="strand" evidence="12">
    <location>
        <begin position="280"/>
        <end position="284"/>
    </location>
</feature>
<feature type="strand" evidence="12">
    <location>
        <begin position="292"/>
        <end position="294"/>
    </location>
</feature>
<feature type="helix" evidence="12">
    <location>
        <begin position="303"/>
        <end position="325"/>
    </location>
</feature>
<feature type="strand" evidence="12">
    <location>
        <begin position="333"/>
        <end position="339"/>
    </location>
</feature>
<feature type="strand" evidence="11">
    <location>
        <begin position="346"/>
        <end position="348"/>
    </location>
</feature>
<feature type="strand" evidence="12">
    <location>
        <begin position="351"/>
        <end position="355"/>
    </location>
</feature>
<feature type="strand" evidence="12">
    <location>
        <begin position="360"/>
        <end position="367"/>
    </location>
</feature>
<feature type="strand" evidence="12">
    <location>
        <begin position="369"/>
        <end position="371"/>
    </location>
</feature>
<feature type="strand" evidence="12">
    <location>
        <begin position="374"/>
        <end position="376"/>
    </location>
</feature>
<feature type="turn" evidence="12">
    <location>
        <begin position="382"/>
        <end position="384"/>
    </location>
</feature>
<feature type="helix" evidence="12">
    <location>
        <begin position="386"/>
        <end position="388"/>
    </location>
</feature>
<feature type="helix" evidence="12">
    <location>
        <begin position="389"/>
        <end position="403"/>
    </location>
</feature>
<feature type="strand" evidence="12">
    <location>
        <begin position="409"/>
        <end position="414"/>
    </location>
</feature>
<feature type="helix" evidence="12">
    <location>
        <begin position="415"/>
        <end position="429"/>
    </location>
</feature>
<feature type="strand" evidence="12">
    <location>
        <begin position="433"/>
        <end position="436"/>
    </location>
</feature>
<feature type="helix" evidence="12">
    <location>
        <begin position="441"/>
        <end position="444"/>
    </location>
</feature>
<feature type="turn" evidence="12">
    <location>
        <begin position="446"/>
        <end position="451"/>
    </location>
</feature>
<feature type="helix" evidence="12">
    <location>
        <begin position="452"/>
        <end position="459"/>
    </location>
</feature>
<feature type="helix" evidence="12">
    <location>
        <begin position="461"/>
        <end position="474"/>
    </location>
</feature>
<feature type="strand" evidence="12">
    <location>
        <begin position="475"/>
        <end position="481"/>
    </location>
</feature>
<feature type="helix" evidence="12">
    <location>
        <begin position="483"/>
        <end position="487"/>
    </location>
</feature>
<feature type="strand" evidence="12">
    <location>
        <begin position="490"/>
        <end position="492"/>
    </location>
</feature>
<feature type="helix" evidence="12">
    <location>
        <begin position="497"/>
        <end position="499"/>
    </location>
</feature>
<feature type="strand" evidence="12">
    <location>
        <begin position="500"/>
        <end position="504"/>
    </location>
</feature>
<feature type="turn" evidence="12">
    <location>
        <begin position="505"/>
        <end position="507"/>
    </location>
</feature>
<feature type="strand" evidence="12">
    <location>
        <begin position="508"/>
        <end position="513"/>
    </location>
</feature>
<feature type="strand" evidence="12">
    <location>
        <begin position="521"/>
        <end position="523"/>
    </location>
</feature>
<feature type="turn" evidence="12">
    <location>
        <begin position="530"/>
        <end position="532"/>
    </location>
</feature>
<feature type="turn" evidence="12">
    <location>
        <begin position="539"/>
        <end position="541"/>
    </location>
</feature>
<feature type="helix" evidence="12">
    <location>
        <begin position="544"/>
        <end position="546"/>
    </location>
</feature>
<feature type="helix" evidence="12">
    <location>
        <begin position="547"/>
        <end position="555"/>
    </location>
</feature>
<feature type="strand" evidence="12">
    <location>
        <begin position="563"/>
        <end position="565"/>
    </location>
</feature>
<feature type="strand" evidence="11">
    <location>
        <begin position="570"/>
        <end position="572"/>
    </location>
</feature>
<feature type="strand" evidence="12">
    <location>
        <begin position="574"/>
        <end position="578"/>
    </location>
</feature>
<feature type="turn" evidence="12">
    <location>
        <begin position="583"/>
        <end position="586"/>
    </location>
</feature>
<feature type="helix" evidence="12">
    <location>
        <begin position="587"/>
        <end position="596"/>
    </location>
</feature>
<feature type="helix" evidence="12">
    <location>
        <begin position="598"/>
        <end position="603"/>
    </location>
</feature>
<feature type="strand" evidence="12">
    <location>
        <begin position="605"/>
        <end position="609"/>
    </location>
</feature>
<feature type="helix" evidence="12">
    <location>
        <begin position="620"/>
        <end position="635"/>
    </location>
</feature>
<feature type="strand" evidence="12">
    <location>
        <begin position="639"/>
        <end position="645"/>
    </location>
</feature>
<feature type="helix" evidence="12">
    <location>
        <begin position="651"/>
        <end position="663"/>
    </location>
</feature>
<feature type="strand" evidence="12">
    <location>
        <begin position="667"/>
        <end position="670"/>
    </location>
</feature>
<feature type="strand" evidence="12">
    <location>
        <begin position="675"/>
        <end position="677"/>
    </location>
</feature>
<feature type="helix" evidence="12">
    <location>
        <begin position="679"/>
        <end position="686"/>
    </location>
</feature>
<feature type="strand" evidence="12">
    <location>
        <begin position="691"/>
        <end position="697"/>
    </location>
</feature>
<feature type="helix" evidence="12">
    <location>
        <begin position="699"/>
        <end position="702"/>
    </location>
</feature>
<feature type="turn" evidence="12">
    <location>
        <begin position="705"/>
        <end position="707"/>
    </location>
</feature>
<feature type="strand" evidence="12">
    <location>
        <begin position="710"/>
        <end position="712"/>
    </location>
</feature>
<feature type="helix" evidence="12">
    <location>
        <begin position="717"/>
        <end position="733"/>
    </location>
</feature>
<feature type="helix" evidence="12">
    <location>
        <begin position="736"/>
        <end position="751"/>
    </location>
</feature>
<feature type="helix" evidence="12">
    <location>
        <begin position="755"/>
        <end position="776"/>
    </location>
</feature>
<feature type="turn" evidence="12">
    <location>
        <begin position="777"/>
        <end position="779"/>
    </location>
</feature>
<feature type="helix" evidence="12">
    <location>
        <begin position="780"/>
        <end position="793"/>
    </location>
</feature>
<feature type="helix" evidence="12">
    <location>
        <begin position="795"/>
        <end position="801"/>
    </location>
</feature>
<gene>
    <name type="primary">SUS1</name>
    <name type="ordered locus">At5g20830</name>
    <name type="ORF">T1M15.230</name>
</gene>
<protein>
    <recommendedName>
        <fullName>Sucrose synthase 1</fullName>
        <shortName>AtSUS1</shortName>
        <ecNumber>2.4.1.13</ecNumber>
    </recommendedName>
    <alternativeName>
        <fullName>Sucrose-UDP glucosyltransferase 1</fullName>
    </alternativeName>
</protein>
<organism>
    <name type="scientific">Arabidopsis thaliana</name>
    <name type="common">Mouse-ear cress</name>
    <dbReference type="NCBI Taxonomy" id="3702"/>
    <lineage>
        <taxon>Eukaryota</taxon>
        <taxon>Viridiplantae</taxon>
        <taxon>Streptophyta</taxon>
        <taxon>Embryophyta</taxon>
        <taxon>Tracheophyta</taxon>
        <taxon>Spermatophyta</taxon>
        <taxon>Magnoliopsida</taxon>
        <taxon>eudicotyledons</taxon>
        <taxon>Gunneridae</taxon>
        <taxon>Pentapetalae</taxon>
        <taxon>rosids</taxon>
        <taxon>malvids</taxon>
        <taxon>Brassicales</taxon>
        <taxon>Brassicaceae</taxon>
        <taxon>Camelineae</taxon>
        <taxon>Arabidopsis</taxon>
    </lineage>
</organism>
<accession>P49040</accession>
<accession>B9DFM1</accession>
<accession>Q56WF2</accession>
<sequence length="808" mass="92998">MANAERMITRVHSQRERLNETLVSERNEVLALLSRVEAKGKGILQQNQIIAEFEALPEQTRKKLEGGPFFDLLKSTQEAIVLPPWVALAVRPRPGVWEYLRVNLHALVVEELQPAEFLHFKEELVDGVKNGNFTLELDFEPFNASIPRPTLHKYIGNGVDFLNRHLSAKLFHDKESLLPLLKFLRLHSHQGKNLMLSEKIQNLNTLQHTLRKAEEYLAELKSETLYEEFEAKFEEIGLERGWGDNAERVLDMIRLLLDLLEAPDPCTLETFLGRVPMVFNVVILSPHGYFAQDNVLGYPDTGGQVVYILDQVRALEIEMLQRIKQQGLNIKPRILILTRLLPDAVGTTCGERLERVYDSEYCDILRVPFRTEKGIVRKWISRFEVWPYLETYTEDAAVELSKELNGKPDLIIGNYSDGNLVASLLAHKLGVTQCTIAHALEKTKYPDSDIYWKKLDDKYHFSCQFTADIFAMNHTDFIITSTFQEIAGSKETVGQYESHTAFTLPGLYRVVHGIDVFDPKFNIVSPGADMSIYFPYTEEKRRLTKFHSEIEELLYSDVENKEHLCVLKDKKKPILFTMARLDRVKNLSGLVEWYGKNTRLRELANLVVVGGDRRKESKDNEEKAEMKKMYDLIEEYKLNGQFRWISSQMDRVRNGELYRYICDTKGAFVQPALYEAFGLTVVEAMTCGLPTFATCKGGPAEIIVHGKSGFHIDPYHGDQAADTLADFFTKCKEDPSHWDEISKGGLQRIEEKYTWQIYSQRLLTLTGVYGFWKHVSNLDRLEARRYLEMFYALKYRPLAQAVPLAQDD</sequence>
<proteinExistence type="evidence at protein level"/>
<evidence type="ECO:0000269" key="1">
    <source>
    </source>
</evidence>
<evidence type="ECO:0000269" key="2">
    <source>
    </source>
</evidence>
<evidence type="ECO:0000269" key="3">
    <source>
    </source>
</evidence>
<evidence type="ECO:0000269" key="4">
    <source>
    </source>
</evidence>
<evidence type="ECO:0000269" key="5">
    <source>
    </source>
</evidence>
<evidence type="ECO:0000269" key="6">
    <source>
    </source>
</evidence>
<evidence type="ECO:0000269" key="7">
    <source>
    </source>
</evidence>
<evidence type="ECO:0000269" key="8">
    <source>
    </source>
</evidence>
<evidence type="ECO:0000269" key="9">
    <source>
    </source>
</evidence>
<evidence type="ECO:0000305" key="10"/>
<evidence type="ECO:0007829" key="11">
    <source>
        <dbReference type="PDB" id="3S27"/>
    </source>
</evidence>
<evidence type="ECO:0007829" key="12">
    <source>
        <dbReference type="PDB" id="3S28"/>
    </source>
</evidence>
<evidence type="ECO:0007829" key="13">
    <source>
        <dbReference type="PDB" id="3S29"/>
    </source>
</evidence>
<reference key="1">
    <citation type="journal article" date="1993" name="Plant J.">
        <title>Expression of an Arabidopsis sucrose synthase gene indicates a role in metabolization of sucrose both during phloem loading and in sink organs.</title>
        <authorList>
            <person name="Martin T."/>
            <person name="Frommer W.B."/>
            <person name="Salanoubat M."/>
            <person name="Willmitzer L."/>
        </authorList>
    </citation>
    <scope>NUCLEOTIDE SEQUENCE [GENOMIC DNA]</scope>
    <scope>TISSUE SPECIFICITY</scope>
    <scope>INDUCTION</scope>
    <source>
        <strain>cv. C24</strain>
    </source>
</reference>
<reference key="2">
    <citation type="journal article" date="2000" name="Nature">
        <title>Sequence and analysis of chromosome 5 of the plant Arabidopsis thaliana.</title>
        <authorList>
            <person name="Tabata S."/>
            <person name="Kaneko T."/>
            <person name="Nakamura Y."/>
            <person name="Kotani H."/>
            <person name="Kato T."/>
            <person name="Asamizu E."/>
            <person name="Miyajima N."/>
            <person name="Sasamoto S."/>
            <person name="Kimura T."/>
            <person name="Hosouchi T."/>
            <person name="Kawashima K."/>
            <person name="Kohara M."/>
            <person name="Matsumoto M."/>
            <person name="Matsuno A."/>
            <person name="Muraki A."/>
            <person name="Nakayama S."/>
            <person name="Nakazaki N."/>
            <person name="Naruo K."/>
            <person name="Okumura S."/>
            <person name="Shinpo S."/>
            <person name="Takeuchi C."/>
            <person name="Wada T."/>
            <person name="Watanabe A."/>
            <person name="Yamada M."/>
            <person name="Yasuda M."/>
            <person name="Sato S."/>
            <person name="de la Bastide M."/>
            <person name="Huang E."/>
            <person name="Spiegel L."/>
            <person name="Gnoj L."/>
            <person name="O'Shaughnessy A."/>
            <person name="Preston R."/>
            <person name="Habermann K."/>
            <person name="Murray J."/>
            <person name="Johnson D."/>
            <person name="Rohlfing T."/>
            <person name="Nelson J."/>
            <person name="Stoneking T."/>
            <person name="Pepin K."/>
            <person name="Spieth J."/>
            <person name="Sekhon M."/>
            <person name="Armstrong J."/>
            <person name="Becker M."/>
            <person name="Belter E."/>
            <person name="Cordum H."/>
            <person name="Cordes M."/>
            <person name="Courtney L."/>
            <person name="Courtney W."/>
            <person name="Dante M."/>
            <person name="Du H."/>
            <person name="Edwards J."/>
            <person name="Fryman J."/>
            <person name="Haakensen B."/>
            <person name="Lamar E."/>
            <person name="Latreille P."/>
            <person name="Leonard S."/>
            <person name="Meyer R."/>
            <person name="Mulvaney E."/>
            <person name="Ozersky P."/>
            <person name="Riley A."/>
            <person name="Strowmatt C."/>
            <person name="Wagner-McPherson C."/>
            <person name="Wollam A."/>
            <person name="Yoakum M."/>
            <person name="Bell M."/>
            <person name="Dedhia N."/>
            <person name="Parnell L."/>
            <person name="Shah R."/>
            <person name="Rodriguez M."/>
            <person name="Hoon See L."/>
            <person name="Vil D."/>
            <person name="Baker J."/>
            <person name="Kirchoff K."/>
            <person name="Toth K."/>
            <person name="King L."/>
            <person name="Bahret A."/>
            <person name="Miller B."/>
            <person name="Marra M.A."/>
            <person name="Martienssen R."/>
            <person name="McCombie W.R."/>
            <person name="Wilson R.K."/>
            <person name="Murphy G."/>
            <person name="Bancroft I."/>
            <person name="Volckaert G."/>
            <person name="Wambutt R."/>
            <person name="Duesterhoeft A."/>
            <person name="Stiekema W."/>
            <person name="Pohl T."/>
            <person name="Entian K.-D."/>
            <person name="Terryn N."/>
            <person name="Hartley N."/>
            <person name="Bent E."/>
            <person name="Johnson S."/>
            <person name="Langham S.-A."/>
            <person name="McCullagh B."/>
            <person name="Robben J."/>
            <person name="Grymonprez B."/>
            <person name="Zimmermann W."/>
            <person name="Ramsperger U."/>
            <person name="Wedler H."/>
            <person name="Balke K."/>
            <person name="Wedler E."/>
            <person name="Peters S."/>
            <person name="van Staveren M."/>
            <person name="Dirkse W."/>
            <person name="Mooijman P."/>
            <person name="Klein Lankhorst R."/>
            <person name="Weitzenegger T."/>
            <person name="Bothe G."/>
            <person name="Rose M."/>
            <person name="Hauf J."/>
            <person name="Berneiser S."/>
            <person name="Hempel S."/>
            <person name="Feldpausch M."/>
            <person name="Lamberth S."/>
            <person name="Villarroel R."/>
            <person name="Gielen J."/>
            <person name="Ardiles W."/>
            <person name="Bents O."/>
            <person name="Lemcke K."/>
            <person name="Kolesov G."/>
            <person name="Mayer K.F.X."/>
            <person name="Rudd S."/>
            <person name="Schoof H."/>
            <person name="Schueller C."/>
            <person name="Zaccaria P."/>
            <person name="Mewes H.-W."/>
            <person name="Bevan M."/>
            <person name="Fransz P.F."/>
        </authorList>
    </citation>
    <scope>NUCLEOTIDE SEQUENCE [LARGE SCALE GENOMIC DNA]</scope>
    <source>
        <strain>cv. Columbia</strain>
    </source>
</reference>
<reference key="3">
    <citation type="journal article" date="2017" name="Plant J.">
        <title>Araport11: a complete reannotation of the Arabidopsis thaliana reference genome.</title>
        <authorList>
            <person name="Cheng C.Y."/>
            <person name="Krishnakumar V."/>
            <person name="Chan A.P."/>
            <person name="Thibaud-Nissen F."/>
            <person name="Schobel S."/>
            <person name="Town C.D."/>
        </authorList>
    </citation>
    <scope>GENOME REANNOTATION</scope>
    <source>
        <strain>cv. Columbia</strain>
    </source>
</reference>
<reference key="4">
    <citation type="journal article" date="2009" name="DNA Res.">
        <title>Analysis of multiple occurrences of alternative splicing events in Arabidopsis thaliana using novel sequenced full-length cDNAs.</title>
        <authorList>
            <person name="Iida K."/>
            <person name="Fukami-Kobayashi K."/>
            <person name="Toyoda A."/>
            <person name="Sakaki Y."/>
            <person name="Kobayashi M."/>
            <person name="Seki M."/>
            <person name="Shinozaki K."/>
        </authorList>
    </citation>
    <scope>NUCLEOTIDE SEQUENCE [LARGE SCALE MRNA]</scope>
    <source>
        <strain>cv. Columbia</strain>
    </source>
</reference>
<reference key="5">
    <citation type="submission" date="2005-03" db="EMBL/GenBank/DDBJ databases">
        <title>Large-scale analysis of RIKEN Arabidopsis full-length (RAFL) cDNAs.</title>
        <authorList>
            <person name="Totoki Y."/>
            <person name="Seki M."/>
            <person name="Ishida J."/>
            <person name="Nakajima M."/>
            <person name="Enju A."/>
            <person name="Kamiya A."/>
            <person name="Narusaka M."/>
            <person name="Shin-i T."/>
            <person name="Nakagawa M."/>
            <person name="Sakamoto N."/>
            <person name="Oishi K."/>
            <person name="Kohara Y."/>
            <person name="Kobayashi M."/>
            <person name="Toyoda A."/>
            <person name="Sakaki Y."/>
            <person name="Sakurai T."/>
            <person name="Iida K."/>
            <person name="Akiyama K."/>
            <person name="Satou M."/>
            <person name="Toyoda T."/>
            <person name="Konagaya A."/>
            <person name="Carninci P."/>
            <person name="Kawai J."/>
            <person name="Hayashizaki Y."/>
            <person name="Shinozaki K."/>
        </authorList>
    </citation>
    <scope>NUCLEOTIDE SEQUENCE [LARGE SCALE MRNA] OF 521-808</scope>
    <source>
        <strain>cv. Columbia</strain>
    </source>
</reference>
<reference key="6">
    <citation type="journal article" date="1999" name="Biochem. J.">
        <title>Sugar/osmoticum levels modulate differential abscisic acid-independent expression of two stress-responsive sucrose synthase genes in Arabidopsis.</title>
        <authorList>
            <person name="Dejardin A."/>
            <person name="Sokolov L.N."/>
            <person name="Kleczkowski L.A."/>
        </authorList>
    </citation>
    <scope>INDUCTION</scope>
</reference>
<reference key="7">
    <citation type="journal article" date="2004" name="J. Exp. Bot.">
        <title>Structure and expression profile of the sucrose synthase multigene family in Arabidopsis.</title>
        <authorList>
            <person name="Baud S."/>
            <person name="Vaultier M.N."/>
            <person name="Rochat C."/>
        </authorList>
    </citation>
    <scope>GENE FAMILY</scope>
    <scope>TISSUE SPECIFICITY</scope>
    <scope>INDUCTION</scope>
</reference>
<reference key="8">
    <citation type="journal article" date="2007" name="FEBS Lett.">
        <title>An efficient chemoenzymatic production of small molecule glucosides with in situ UDP-glucose recycling.</title>
        <authorList>
            <person name="Masada S."/>
            <person name="Kawase Y."/>
            <person name="Nagatoshi M."/>
            <person name="Oguchi Y."/>
            <person name="Terasaka K."/>
            <person name="Mizukami H."/>
        </authorList>
    </citation>
    <scope>BIOTECHNOLOGY</scope>
</reference>
<reference key="9">
    <citation type="journal article" date="2007" name="Mol. Cell. Proteomics">
        <title>Multidimensional protein identification technology (MudPIT) analysis of ubiquitinated proteins in plants.</title>
        <authorList>
            <person name="Maor R."/>
            <person name="Jones A."/>
            <person name="Nuehse T.S."/>
            <person name="Studholme D.J."/>
            <person name="Peck S.C."/>
            <person name="Shirasu K."/>
        </authorList>
    </citation>
    <scope>IDENTIFICATION BY MASS SPECTROMETRY [LARGE SCALE ANALYSIS]</scope>
    <source>
        <strain>cv. Landsberg erecta</strain>
    </source>
</reference>
<reference key="10">
    <citation type="journal article" date="2007" name="Plant J.">
        <title>Analysis of the sucrose synthase gene family in Arabidopsis.</title>
        <authorList>
            <person name="Bieniawska Z."/>
            <person name="Paul Barratt D.H."/>
            <person name="Garlick A.P."/>
            <person name="Thole V."/>
            <person name="Kruger N.J."/>
            <person name="Martin C."/>
            <person name="Zrenner R."/>
            <person name="Smith A.M."/>
        </authorList>
    </citation>
    <scope>BIOPHYSICOCHEMICAL PROPERTIES</scope>
    <scope>TISSUE SPECIFICITY</scope>
    <scope>INDUCTION</scope>
    <scope>DISRUPTION PHENOTYPE</scope>
</reference>
<reference key="11">
    <citation type="journal article" date="2008" name="J. Exp. Bot.">
        <title>Localization of sucrose synthase in developing seed and siliques of Arabidopsis thaliana reveals diverse roles for SUS during development.</title>
        <authorList>
            <person name="Fallahi H."/>
            <person name="Scofield G.N."/>
            <person name="Badger M.R."/>
            <person name="Chow W.S."/>
            <person name="Furbank R.T."/>
            <person name="Ruan Y.L."/>
        </authorList>
    </citation>
    <scope>TISSUE SPECIFICITY</scope>
</reference>
<reference key="12">
    <citation type="journal article" date="2011" name="Plant J.">
        <title>Modulation of sugar metabolism by an INDETERMINATE DOMAIN transcription factor contributes to photoperiodic flowering in Arabidopsis.</title>
        <authorList>
            <person name="Seo P.J."/>
            <person name="Ryu J."/>
            <person name="Kang S.K."/>
            <person name="Park C.M."/>
        </authorList>
    </citation>
    <scope>INDUCTION BY NUC</scope>
</reference>
<reference key="13">
    <citation type="journal article" date="2012" name="Proc. Natl. Acad. Sci. U.S.A.">
        <title>Sucrose synthase activity in the sus1/sus2/sus3/sus4 Arabidopsis mutant is sufficient to support normal cellulose and starch production.</title>
        <authorList>
            <person name="Baroja-Fernandez E."/>
            <person name="Munoz F.J."/>
            <person name="Li J."/>
            <person name="Bahaji A."/>
            <person name="Almagro G."/>
            <person name="Montero M."/>
            <person name="Etxeberria E."/>
            <person name="Hidalgo M."/>
            <person name="Sesma M.T."/>
            <person name="Pozueta-Romero J."/>
        </authorList>
    </citation>
    <scope>BIOPHYSICOCHEMICAL PROPERTIES</scope>
</reference>
<reference key="14">
    <citation type="journal article" date="2011" name="J. Biol. Chem.">
        <title>The structure of sucrose synthase-1 from Arabidopsis thaliana and its functional implications.</title>
        <authorList>
            <person name="Zheng Y."/>
            <person name="Anderson S."/>
            <person name="Zhang Y."/>
            <person name="Garavito R.M."/>
        </authorList>
    </citation>
    <scope>X-RAY CRYSTALLOGRAPHY (2.8 ANGSTROMS) IN COMPLEX WITH SUBSTRATE</scope>
    <scope>SUBUNIT</scope>
    <scope>FUNCTION</scope>
</reference>